<gene>
    <name evidence="1" type="primary">mnmA</name>
    <name type="synonym">trmU</name>
    <name type="ordered locus">BCI_0422</name>
</gene>
<name>MNMA_BAUCH</name>
<protein>
    <recommendedName>
        <fullName evidence="1">tRNA-specific 2-thiouridylase MnmA</fullName>
        <ecNumber evidence="1">2.8.1.13</ecNumber>
    </recommendedName>
</protein>
<proteinExistence type="inferred from homology"/>
<keyword id="KW-0067">ATP-binding</keyword>
<keyword id="KW-0963">Cytoplasm</keyword>
<keyword id="KW-1015">Disulfide bond</keyword>
<keyword id="KW-0547">Nucleotide-binding</keyword>
<keyword id="KW-1185">Reference proteome</keyword>
<keyword id="KW-0694">RNA-binding</keyword>
<keyword id="KW-0808">Transferase</keyword>
<keyword id="KW-0819">tRNA processing</keyword>
<keyword id="KW-0820">tRNA-binding</keyword>
<accession>Q1LT51</accession>
<dbReference type="EC" id="2.8.1.13" evidence="1"/>
<dbReference type="EMBL" id="CP000238">
    <property type="protein sequence ID" value="ABF14055.1"/>
    <property type="molecule type" value="Genomic_DNA"/>
</dbReference>
<dbReference type="RefSeq" id="WP_011520596.1">
    <property type="nucleotide sequence ID" value="NC_007984.1"/>
</dbReference>
<dbReference type="SMR" id="Q1LT51"/>
<dbReference type="STRING" id="374463.BCI_0422"/>
<dbReference type="KEGG" id="bci:BCI_0422"/>
<dbReference type="HOGENOM" id="CLU_035188_1_0_6"/>
<dbReference type="OrthoDB" id="9800696at2"/>
<dbReference type="Proteomes" id="UP000002427">
    <property type="component" value="Chromosome"/>
</dbReference>
<dbReference type="GO" id="GO:0005737">
    <property type="term" value="C:cytoplasm"/>
    <property type="evidence" value="ECO:0007669"/>
    <property type="project" value="UniProtKB-SubCell"/>
</dbReference>
<dbReference type="GO" id="GO:0005524">
    <property type="term" value="F:ATP binding"/>
    <property type="evidence" value="ECO:0007669"/>
    <property type="project" value="UniProtKB-KW"/>
</dbReference>
<dbReference type="GO" id="GO:0000049">
    <property type="term" value="F:tRNA binding"/>
    <property type="evidence" value="ECO:0007669"/>
    <property type="project" value="UniProtKB-KW"/>
</dbReference>
<dbReference type="GO" id="GO:0103016">
    <property type="term" value="F:tRNA-uridine 2-sulfurtransferase activity"/>
    <property type="evidence" value="ECO:0007669"/>
    <property type="project" value="UniProtKB-EC"/>
</dbReference>
<dbReference type="GO" id="GO:0002143">
    <property type="term" value="P:tRNA wobble position uridine thiolation"/>
    <property type="evidence" value="ECO:0007669"/>
    <property type="project" value="TreeGrafter"/>
</dbReference>
<dbReference type="CDD" id="cd01998">
    <property type="entry name" value="MnmA_TRMU-like"/>
    <property type="match status" value="1"/>
</dbReference>
<dbReference type="FunFam" id="2.30.30.280:FF:000001">
    <property type="entry name" value="tRNA-specific 2-thiouridylase MnmA"/>
    <property type="match status" value="1"/>
</dbReference>
<dbReference type="FunFam" id="2.40.30.10:FF:000023">
    <property type="entry name" value="tRNA-specific 2-thiouridylase MnmA"/>
    <property type="match status" value="1"/>
</dbReference>
<dbReference type="FunFam" id="3.40.50.620:FF:000004">
    <property type="entry name" value="tRNA-specific 2-thiouridylase MnmA"/>
    <property type="match status" value="1"/>
</dbReference>
<dbReference type="Gene3D" id="2.30.30.280">
    <property type="entry name" value="Adenine nucleotide alpha hydrolases-like domains"/>
    <property type="match status" value="1"/>
</dbReference>
<dbReference type="Gene3D" id="3.40.50.620">
    <property type="entry name" value="HUPs"/>
    <property type="match status" value="1"/>
</dbReference>
<dbReference type="Gene3D" id="2.40.30.10">
    <property type="entry name" value="Translation factors"/>
    <property type="match status" value="1"/>
</dbReference>
<dbReference type="HAMAP" id="MF_00144">
    <property type="entry name" value="tRNA_thiouridyl_MnmA"/>
    <property type="match status" value="1"/>
</dbReference>
<dbReference type="InterPro" id="IPR004506">
    <property type="entry name" value="MnmA-like"/>
</dbReference>
<dbReference type="InterPro" id="IPR046885">
    <property type="entry name" value="MnmA-like_C"/>
</dbReference>
<dbReference type="InterPro" id="IPR046884">
    <property type="entry name" value="MnmA-like_central"/>
</dbReference>
<dbReference type="InterPro" id="IPR023382">
    <property type="entry name" value="MnmA-like_central_sf"/>
</dbReference>
<dbReference type="InterPro" id="IPR014729">
    <property type="entry name" value="Rossmann-like_a/b/a_fold"/>
</dbReference>
<dbReference type="NCBIfam" id="NF001138">
    <property type="entry name" value="PRK00143.1"/>
    <property type="match status" value="1"/>
</dbReference>
<dbReference type="NCBIfam" id="TIGR00420">
    <property type="entry name" value="trmU"/>
    <property type="match status" value="1"/>
</dbReference>
<dbReference type="PANTHER" id="PTHR11933:SF5">
    <property type="entry name" value="MITOCHONDRIAL TRNA-SPECIFIC 2-THIOURIDYLASE 1"/>
    <property type="match status" value="1"/>
</dbReference>
<dbReference type="PANTHER" id="PTHR11933">
    <property type="entry name" value="TRNA 5-METHYLAMINOMETHYL-2-THIOURIDYLATE -METHYLTRANSFERASE"/>
    <property type="match status" value="1"/>
</dbReference>
<dbReference type="Pfam" id="PF03054">
    <property type="entry name" value="tRNA_Me_trans"/>
    <property type="match status" value="1"/>
</dbReference>
<dbReference type="Pfam" id="PF20258">
    <property type="entry name" value="tRNA_Me_trans_C"/>
    <property type="match status" value="1"/>
</dbReference>
<dbReference type="Pfam" id="PF20259">
    <property type="entry name" value="tRNA_Me_trans_M"/>
    <property type="match status" value="1"/>
</dbReference>
<dbReference type="SUPFAM" id="SSF52402">
    <property type="entry name" value="Adenine nucleotide alpha hydrolases-like"/>
    <property type="match status" value="1"/>
</dbReference>
<organism>
    <name type="scientific">Baumannia cicadellinicola subsp. Homalodisca coagulata</name>
    <dbReference type="NCBI Taxonomy" id="374463"/>
    <lineage>
        <taxon>Bacteria</taxon>
        <taxon>Pseudomonadati</taxon>
        <taxon>Pseudomonadota</taxon>
        <taxon>Gammaproteobacteria</taxon>
        <taxon>Candidatus Palibaumannia</taxon>
    </lineage>
</organism>
<reference key="1">
    <citation type="journal article" date="2006" name="PLoS Biol.">
        <title>Metabolic complementarity and genomics of the dual bacterial symbiosis of sharpshooters.</title>
        <authorList>
            <person name="Wu D."/>
            <person name="Daugherty S.C."/>
            <person name="Van Aken S.E."/>
            <person name="Pai G.H."/>
            <person name="Watkins K.L."/>
            <person name="Khouri H."/>
            <person name="Tallon L.J."/>
            <person name="Zaborsky J.M."/>
            <person name="Dunbar H.E."/>
            <person name="Tran P.L."/>
            <person name="Moran N.A."/>
            <person name="Eisen J.A."/>
        </authorList>
    </citation>
    <scope>NUCLEOTIDE SEQUENCE [LARGE SCALE GENOMIC DNA]</scope>
</reference>
<comment type="function">
    <text evidence="1">Catalyzes the 2-thiolation of uridine at the wobble position (U34) of tRNA, leading to the formation of s(2)U34.</text>
</comment>
<comment type="catalytic activity">
    <reaction evidence="1">
        <text>S-sulfanyl-L-cysteinyl-[protein] + uridine(34) in tRNA + AH2 + ATP = 2-thiouridine(34) in tRNA + L-cysteinyl-[protein] + A + AMP + diphosphate + H(+)</text>
        <dbReference type="Rhea" id="RHEA:47032"/>
        <dbReference type="Rhea" id="RHEA-COMP:10131"/>
        <dbReference type="Rhea" id="RHEA-COMP:11726"/>
        <dbReference type="Rhea" id="RHEA-COMP:11727"/>
        <dbReference type="Rhea" id="RHEA-COMP:11728"/>
        <dbReference type="ChEBI" id="CHEBI:13193"/>
        <dbReference type="ChEBI" id="CHEBI:15378"/>
        <dbReference type="ChEBI" id="CHEBI:17499"/>
        <dbReference type="ChEBI" id="CHEBI:29950"/>
        <dbReference type="ChEBI" id="CHEBI:30616"/>
        <dbReference type="ChEBI" id="CHEBI:33019"/>
        <dbReference type="ChEBI" id="CHEBI:61963"/>
        <dbReference type="ChEBI" id="CHEBI:65315"/>
        <dbReference type="ChEBI" id="CHEBI:87170"/>
        <dbReference type="ChEBI" id="CHEBI:456215"/>
        <dbReference type="EC" id="2.8.1.13"/>
    </reaction>
</comment>
<comment type="subcellular location">
    <subcellularLocation>
        <location evidence="1">Cytoplasm</location>
    </subcellularLocation>
</comment>
<comment type="similarity">
    <text evidence="1">Belongs to the MnmA/TRMU family.</text>
</comment>
<feature type="chain" id="PRO_1000057944" description="tRNA-specific 2-thiouridylase MnmA">
    <location>
        <begin position="1"/>
        <end position="368"/>
    </location>
</feature>
<feature type="region of interest" description="Interaction with target base in tRNA" evidence="1">
    <location>
        <begin position="97"/>
        <end position="99"/>
    </location>
</feature>
<feature type="region of interest" description="Interaction with tRNA" evidence="1">
    <location>
        <begin position="149"/>
        <end position="151"/>
    </location>
</feature>
<feature type="region of interest" description="Interaction with tRNA" evidence="1">
    <location>
        <begin position="311"/>
        <end position="312"/>
    </location>
</feature>
<feature type="active site" description="Nucleophile" evidence="1">
    <location>
        <position position="102"/>
    </location>
</feature>
<feature type="active site" description="Cysteine persulfide intermediate" evidence="1">
    <location>
        <position position="199"/>
    </location>
</feature>
<feature type="binding site" evidence="1">
    <location>
        <begin position="11"/>
        <end position="18"/>
    </location>
    <ligand>
        <name>ATP</name>
        <dbReference type="ChEBI" id="CHEBI:30616"/>
    </ligand>
</feature>
<feature type="binding site" evidence="1">
    <location>
        <position position="37"/>
    </location>
    <ligand>
        <name>ATP</name>
        <dbReference type="ChEBI" id="CHEBI:30616"/>
    </ligand>
</feature>
<feature type="binding site" evidence="1">
    <location>
        <position position="127"/>
    </location>
    <ligand>
        <name>ATP</name>
        <dbReference type="ChEBI" id="CHEBI:30616"/>
    </ligand>
</feature>
<feature type="site" description="Interaction with tRNA" evidence="1">
    <location>
        <position position="128"/>
    </location>
</feature>
<feature type="site" description="Interaction with tRNA" evidence="1">
    <location>
        <position position="344"/>
    </location>
</feature>
<feature type="disulfide bond" description="Alternate" evidence="1">
    <location>
        <begin position="102"/>
        <end position="199"/>
    </location>
</feature>
<evidence type="ECO:0000255" key="1">
    <source>
        <dbReference type="HAMAP-Rule" id="MF_00144"/>
    </source>
</evidence>
<sequence length="368" mass="41246">MNIINKKVIVGMSGGVDSSVSALLLLQQGYTVEGLFMKNWEEDDHEQYCTVAKDLADAQAVCNQLGIILHKVNFAAEYWDNVFEYFLAEYQVGRTPNPDILCNKNIKFKVFLDFATQNLGADYIATGHYVIRKDINGKSRLLRGLDNQKDQSYFLYTIGYQQMARCFFPLGKLNKLRVREIAAKQGLVTASKKDSTGICFIGKRKLSDLLSRYISAKPGAIITVDNEYIGYHQGLMYYTLGQRKKLGIGGTKNGSQDPWYVVDKDINHNLLIIAQGHNHPRLMSNGLIASKLYWVDRTTLSTPLRCTVKTRYRQSDIGCLIKPIANNQLQVDFDYPVAAVTPGQSAVFYLAEQCIGGGTIEIRKPLGS</sequence>